<comment type="similarity">
    <text evidence="1">Belongs to the UPF0145 family.</text>
</comment>
<sequence length="104" mass="11202">MLITNIETIPGKNIVKHLGLVQGSTVRSKHVGRDIMAGLKNIFGGELRGYTELLEDARGEALERMKRQARGMGANAVINVRFATSSVAQGAAELFVYGTAVVME</sequence>
<name>Y1985_HAHCH</name>
<reference key="1">
    <citation type="journal article" date="2005" name="Nucleic Acids Res.">
        <title>Genomic blueprint of Hahella chejuensis, a marine microbe producing an algicidal agent.</title>
        <authorList>
            <person name="Jeong H."/>
            <person name="Yim J.H."/>
            <person name="Lee C."/>
            <person name="Choi S.-H."/>
            <person name="Park Y.K."/>
            <person name="Yoon S.H."/>
            <person name="Hur C.-G."/>
            <person name="Kang H.-Y."/>
            <person name="Kim D."/>
            <person name="Lee H.H."/>
            <person name="Park K.H."/>
            <person name="Park S.-H."/>
            <person name="Park H.-S."/>
            <person name="Lee H.K."/>
            <person name="Oh T.K."/>
            <person name="Kim J.F."/>
        </authorList>
    </citation>
    <scope>NUCLEOTIDE SEQUENCE [LARGE SCALE GENOMIC DNA]</scope>
    <source>
        <strain>KCTC 2396</strain>
    </source>
</reference>
<proteinExistence type="inferred from homology"/>
<dbReference type="EMBL" id="CP000155">
    <property type="protein sequence ID" value="ABC28818.1"/>
    <property type="molecule type" value="Genomic_DNA"/>
</dbReference>
<dbReference type="RefSeq" id="WP_011395889.1">
    <property type="nucleotide sequence ID" value="NC_007645.1"/>
</dbReference>
<dbReference type="SMR" id="Q2SKK6"/>
<dbReference type="STRING" id="349521.HCH_01985"/>
<dbReference type="KEGG" id="hch:HCH_01985"/>
<dbReference type="eggNOG" id="COG0393">
    <property type="taxonomic scope" value="Bacteria"/>
</dbReference>
<dbReference type="HOGENOM" id="CLU_117144_1_2_6"/>
<dbReference type="OrthoDB" id="9796448at2"/>
<dbReference type="Proteomes" id="UP000000238">
    <property type="component" value="Chromosome"/>
</dbReference>
<dbReference type="Gene3D" id="3.30.110.70">
    <property type="entry name" value="Hypothetical protein apc22750. Chain B"/>
    <property type="match status" value="1"/>
</dbReference>
<dbReference type="HAMAP" id="MF_00338">
    <property type="entry name" value="UPF0145"/>
    <property type="match status" value="1"/>
</dbReference>
<dbReference type="InterPro" id="IPR035439">
    <property type="entry name" value="UPF0145_dom_sf"/>
</dbReference>
<dbReference type="InterPro" id="IPR002765">
    <property type="entry name" value="UPF0145_YbjQ-like"/>
</dbReference>
<dbReference type="PANTHER" id="PTHR34068:SF2">
    <property type="entry name" value="UPF0145 PROTEIN SCO3412"/>
    <property type="match status" value="1"/>
</dbReference>
<dbReference type="PANTHER" id="PTHR34068">
    <property type="entry name" value="UPF0145 PROTEIN YBJQ"/>
    <property type="match status" value="1"/>
</dbReference>
<dbReference type="Pfam" id="PF01906">
    <property type="entry name" value="YbjQ_1"/>
    <property type="match status" value="1"/>
</dbReference>
<dbReference type="SUPFAM" id="SSF117782">
    <property type="entry name" value="YbjQ-like"/>
    <property type="match status" value="1"/>
</dbReference>
<keyword id="KW-1185">Reference proteome</keyword>
<accession>Q2SKK6</accession>
<gene>
    <name type="ordered locus">HCH_01985</name>
</gene>
<evidence type="ECO:0000255" key="1">
    <source>
        <dbReference type="HAMAP-Rule" id="MF_00338"/>
    </source>
</evidence>
<feature type="chain" id="PRO_1000013004" description="UPF0145 protein HCH_01985">
    <location>
        <begin position="1"/>
        <end position="104"/>
    </location>
</feature>
<protein>
    <recommendedName>
        <fullName evidence="1">UPF0145 protein HCH_01985</fullName>
    </recommendedName>
</protein>
<organism>
    <name type="scientific">Hahella chejuensis (strain KCTC 2396)</name>
    <dbReference type="NCBI Taxonomy" id="349521"/>
    <lineage>
        <taxon>Bacteria</taxon>
        <taxon>Pseudomonadati</taxon>
        <taxon>Pseudomonadota</taxon>
        <taxon>Gammaproteobacteria</taxon>
        <taxon>Oceanospirillales</taxon>
        <taxon>Hahellaceae</taxon>
        <taxon>Hahella</taxon>
    </lineage>
</organism>